<proteinExistence type="evidence at protein level"/>
<organism>
    <name type="scientific">Mus musculus</name>
    <name type="common">Mouse</name>
    <dbReference type="NCBI Taxonomy" id="10090"/>
    <lineage>
        <taxon>Eukaryota</taxon>
        <taxon>Metazoa</taxon>
        <taxon>Chordata</taxon>
        <taxon>Craniata</taxon>
        <taxon>Vertebrata</taxon>
        <taxon>Euteleostomi</taxon>
        <taxon>Mammalia</taxon>
        <taxon>Eutheria</taxon>
        <taxon>Euarchontoglires</taxon>
        <taxon>Glires</taxon>
        <taxon>Rodentia</taxon>
        <taxon>Myomorpha</taxon>
        <taxon>Muroidea</taxon>
        <taxon>Muridae</taxon>
        <taxon>Murinae</taxon>
        <taxon>Mus</taxon>
        <taxon>Mus</taxon>
    </lineage>
</organism>
<accession>Q6P7W2</accession>
<accession>Q3TUN8</accession>
<accession>Q9ES31</accession>
<feature type="initiator methionine" description="Removed" evidence="1">
    <location>
        <position position="1"/>
    </location>
</feature>
<feature type="chain" id="PRO_0000307933" description="SH3KBP1-binding protein 1">
    <location>
        <begin position="2"/>
        <end position="704"/>
    </location>
</feature>
<feature type="domain" description="BTB" evidence="2">
    <location>
        <begin position="19"/>
        <end position="88"/>
    </location>
</feature>
<feature type="repeat" description="WD 1">
    <location>
        <begin position="233"/>
        <end position="280"/>
    </location>
</feature>
<feature type="repeat" description="WD 2">
    <location>
        <begin position="283"/>
        <end position="322"/>
    </location>
</feature>
<feature type="repeat" description="WD 3">
    <location>
        <begin position="324"/>
        <end position="359"/>
    </location>
</feature>
<feature type="repeat" description="WD 4">
    <location>
        <begin position="428"/>
        <end position="466"/>
    </location>
</feature>
<feature type="repeat" description="WD 5">
    <location>
        <begin position="548"/>
        <end position="586"/>
    </location>
</feature>
<feature type="region of interest" description="Disordered" evidence="3">
    <location>
        <begin position="146"/>
        <end position="165"/>
    </location>
</feature>
<feature type="region of interest" description="Disordered" evidence="3">
    <location>
        <begin position="609"/>
        <end position="704"/>
    </location>
</feature>
<feature type="short sequence motif" description="PXXXPR" evidence="8">
    <location>
        <begin position="618"/>
        <end position="623"/>
    </location>
</feature>
<feature type="short sequence motif" description="PXXXPR" evidence="8">
    <location>
        <begin position="678"/>
        <end position="683"/>
    </location>
</feature>
<feature type="compositionally biased region" description="Low complexity" evidence="3">
    <location>
        <begin position="612"/>
        <end position="631"/>
    </location>
</feature>
<feature type="modified residue" description="N-acetylalanine" evidence="1">
    <location>
        <position position="2"/>
    </location>
</feature>
<feature type="modified residue" description="Phosphothreonine" evidence="1">
    <location>
        <position position="163"/>
    </location>
</feature>
<feature type="modified residue" description="Phosphoserine" evidence="1">
    <location>
        <position position="644"/>
    </location>
</feature>
<feature type="modified residue" description="Phosphoserine" evidence="1">
    <location>
        <position position="646"/>
    </location>
</feature>
<feature type="modified residue" description="Phosphothreonine" evidence="1">
    <location>
        <position position="693"/>
    </location>
</feature>
<feature type="splice variant" id="VSP_028875" description="In isoform 2." evidence="6">
    <location>
        <begin position="1"/>
        <end position="163"/>
    </location>
</feature>
<feature type="splice variant" id="VSP_028876" description="In isoform 2." evidence="6">
    <location>
        <position position="590"/>
    </location>
</feature>
<feature type="mutagenesis site" description="No loss of interaction with SH3KBP1, loss of translocation of SH3KBP1 to EGFR containing vesicles upon EGF stimulation, strong delay in the degradation of EGFR upon EGF activation and enhancement of EGFR signaling induced serum response element (SRE) transcriptional reporter activity. Loss of interaction with SH3KBP1, no loss of translocation of SH3KBP1 to EGFR containing vesicles upon EGF stimulation, no effect on the degradation of EGFR upon EGF activation and no effect on EGFR signaling induced serum response element (SRE) transcriptional reporter activity; when associated with A-683." evidence="5">
    <original>R</original>
    <variation>A</variation>
    <location>
        <position position="623"/>
    </location>
</feature>
<feature type="mutagenesis site" description="No loss of interaction with SH3KBP1, loss of translocation of SH3KBP1 to EGFR containing vesicles upon EGF stimulation, slight delay in the degradation of EGFR upon EGF activation and enhancement of EGFR signaling induced serum response element (SRE) transcriptional reporter activity. Loss of interaction with SH3KBP1, no loss of translocation of SH3KBP1 to EGFR containing vesicles upon EGF stimulation, no effect on the degradation of EGFR upon EGF activation and no effect on EGFR signaling induced serum response element (SRE) transcriptional reporter activity; when associated with A-623." evidence="5">
    <original>R</original>
    <variation>A</variation>
    <location>
        <position position="683"/>
    </location>
</feature>
<feature type="sequence conflict" description="In Ref. 1; AAG13656." evidence="7" ref="1">
    <original>A</original>
    <variation>P</variation>
    <location>
        <position position="4"/>
    </location>
</feature>
<feature type="sequence conflict" description="In Ref. 1; AAG13656." evidence="7" ref="1">
    <original>P</original>
    <variation>R</variation>
    <location>
        <position position="12"/>
    </location>
</feature>
<feature type="sequence conflict" description="In Ref. 2; BAE35933." evidence="7" ref="2">
    <original>R</original>
    <variation>S</variation>
    <location>
        <position position="430"/>
    </location>
</feature>
<keyword id="KW-0007">Acetylation</keyword>
<keyword id="KW-0025">Alternative splicing</keyword>
<keyword id="KW-0458">Lysosome</keyword>
<keyword id="KW-0597">Phosphoprotein</keyword>
<keyword id="KW-1185">Reference proteome</keyword>
<keyword id="KW-0677">Repeat</keyword>
<keyword id="KW-0853">WD repeat</keyword>
<dbReference type="EMBL" id="AF246218">
    <property type="protein sequence ID" value="AAG13656.1"/>
    <property type="molecule type" value="mRNA"/>
</dbReference>
<dbReference type="EMBL" id="AK160641">
    <property type="protein sequence ID" value="BAE35933.1"/>
    <property type="molecule type" value="mRNA"/>
</dbReference>
<dbReference type="EMBL" id="BC061477">
    <property type="protein sequence ID" value="AAH61477.1"/>
    <property type="molecule type" value="mRNA"/>
</dbReference>
<dbReference type="CCDS" id="CCDS21018.1">
    <molecule id="Q6P7W2-1"/>
</dbReference>
<dbReference type="RefSeq" id="NP_619617.2">
    <molecule id="Q6P7W2-1"/>
    <property type="nucleotide sequence ID" value="NM_138676.2"/>
</dbReference>
<dbReference type="SMR" id="Q6P7W2"/>
<dbReference type="BioGRID" id="228669">
    <property type="interactions" value="1"/>
</dbReference>
<dbReference type="FunCoup" id="Q6P7W2">
    <property type="interactions" value="70"/>
</dbReference>
<dbReference type="IntAct" id="Q6P7W2">
    <property type="interactions" value="2"/>
</dbReference>
<dbReference type="MINT" id="Q6P7W2"/>
<dbReference type="STRING" id="10090.ENSMUSP00000003857"/>
<dbReference type="GlyGen" id="Q6P7W2">
    <property type="glycosylation" value="1 site"/>
</dbReference>
<dbReference type="iPTMnet" id="Q6P7W2"/>
<dbReference type="PhosphoSitePlus" id="Q6P7W2"/>
<dbReference type="PaxDb" id="10090-ENSMUSP00000003857"/>
<dbReference type="PeptideAtlas" id="Q6P7W2"/>
<dbReference type="ProteomicsDB" id="257003">
    <molecule id="Q6P7W2-1"/>
</dbReference>
<dbReference type="ProteomicsDB" id="257004">
    <molecule id="Q6P7W2-2"/>
</dbReference>
<dbReference type="Pumba" id="Q6P7W2"/>
<dbReference type="Antibodypedia" id="45190">
    <property type="antibodies" value="64 antibodies from 19 providers"/>
</dbReference>
<dbReference type="DNASU" id="192192"/>
<dbReference type="Ensembl" id="ENSMUST00000003857.7">
    <molecule id="Q6P7W2-1"/>
    <property type="protein sequence ID" value="ENSMUSP00000003857.7"/>
    <property type="gene ID" value="ENSMUSG00000089832.9"/>
</dbReference>
<dbReference type="GeneID" id="192192"/>
<dbReference type="KEGG" id="mmu:192192"/>
<dbReference type="UCSC" id="uc009fvv.1">
    <molecule id="Q6P7W2-1"/>
    <property type="organism name" value="mouse"/>
</dbReference>
<dbReference type="UCSC" id="uc009fvy.1">
    <molecule id="Q6P7W2-2"/>
    <property type="organism name" value="mouse"/>
</dbReference>
<dbReference type="AGR" id="MGI:2385803"/>
<dbReference type="CTD" id="92799"/>
<dbReference type="MGI" id="MGI:2385803">
    <property type="gene designation" value="Shkbp1"/>
</dbReference>
<dbReference type="VEuPathDB" id="HostDB:ENSMUSG00000089832"/>
<dbReference type="eggNOG" id="KOG2714">
    <property type="taxonomic scope" value="Eukaryota"/>
</dbReference>
<dbReference type="GeneTree" id="ENSGT00940000153881"/>
<dbReference type="HOGENOM" id="CLU_012214_0_1_1"/>
<dbReference type="InParanoid" id="Q6P7W2"/>
<dbReference type="OMA" id="FRTERLH"/>
<dbReference type="OrthoDB" id="6077599at2759"/>
<dbReference type="PhylomeDB" id="Q6P7W2"/>
<dbReference type="TreeFam" id="TF313754"/>
<dbReference type="BioGRID-ORCS" id="192192">
    <property type="hits" value="2 hits in 78 CRISPR screens"/>
</dbReference>
<dbReference type="ChiTaRS" id="Shkbp1">
    <property type="organism name" value="mouse"/>
</dbReference>
<dbReference type="PRO" id="PR:Q6P7W2"/>
<dbReference type="Proteomes" id="UP000000589">
    <property type="component" value="Chromosome 7"/>
</dbReference>
<dbReference type="RNAct" id="Q6P7W2">
    <property type="molecule type" value="protein"/>
</dbReference>
<dbReference type="Bgee" id="ENSMUSG00000089832">
    <property type="expression patterns" value="Expressed in granulocyte and 254 other cell types or tissues"/>
</dbReference>
<dbReference type="GO" id="GO:0005764">
    <property type="term" value="C:lysosome"/>
    <property type="evidence" value="ECO:0007669"/>
    <property type="project" value="UniProtKB-SubCell"/>
</dbReference>
<dbReference type="GO" id="GO:0042802">
    <property type="term" value="F:identical protein binding"/>
    <property type="evidence" value="ECO:0007669"/>
    <property type="project" value="Ensembl"/>
</dbReference>
<dbReference type="GO" id="GO:0045742">
    <property type="term" value="P:positive regulation of epidermal growth factor receptor signaling pathway"/>
    <property type="evidence" value="ECO:0000315"/>
    <property type="project" value="UniProtKB"/>
</dbReference>
<dbReference type="GO" id="GO:0051260">
    <property type="term" value="P:protein homooligomerization"/>
    <property type="evidence" value="ECO:0007669"/>
    <property type="project" value="InterPro"/>
</dbReference>
<dbReference type="CDD" id="cd18393">
    <property type="entry name" value="BTB_POZ_SHKBP1"/>
    <property type="match status" value="1"/>
</dbReference>
<dbReference type="FunFam" id="3.30.710.10:FF:000038">
    <property type="entry name" value="BTB/POZ domain-containing protein KCTD3 isoform X1"/>
    <property type="match status" value="1"/>
</dbReference>
<dbReference type="FunFam" id="2.130.10.10:FF:000439">
    <property type="entry name" value="SH3KBP1 binding protein 1"/>
    <property type="match status" value="1"/>
</dbReference>
<dbReference type="Gene3D" id="3.30.710.10">
    <property type="entry name" value="Potassium Channel Kv1.1, Chain A"/>
    <property type="match status" value="1"/>
</dbReference>
<dbReference type="Gene3D" id="2.130.10.10">
    <property type="entry name" value="YVTN repeat-like/Quinoprotein amine dehydrogenase"/>
    <property type="match status" value="1"/>
</dbReference>
<dbReference type="InterPro" id="IPR000210">
    <property type="entry name" value="BTB/POZ_dom"/>
</dbReference>
<dbReference type="InterPro" id="IPR047876">
    <property type="entry name" value="SHKBP1/KCTD3"/>
</dbReference>
<dbReference type="InterPro" id="IPR047825">
    <property type="entry name" value="SHKBP1_KCTD3_BTB_POZ"/>
</dbReference>
<dbReference type="InterPro" id="IPR011333">
    <property type="entry name" value="SKP1/BTB/POZ_sf"/>
</dbReference>
<dbReference type="InterPro" id="IPR003131">
    <property type="entry name" value="T1-type_BTB"/>
</dbReference>
<dbReference type="InterPro" id="IPR015943">
    <property type="entry name" value="WD40/YVTN_repeat-like_dom_sf"/>
</dbReference>
<dbReference type="InterPro" id="IPR036322">
    <property type="entry name" value="WD40_repeat_dom_sf"/>
</dbReference>
<dbReference type="InterPro" id="IPR001680">
    <property type="entry name" value="WD40_rpt"/>
</dbReference>
<dbReference type="PANTHER" id="PTHR15859">
    <property type="entry name" value="SETA BINDING PROTEIN 1"/>
    <property type="match status" value="1"/>
</dbReference>
<dbReference type="PANTHER" id="PTHR15859:SF5">
    <property type="entry name" value="SH3KBP1-BINDING PROTEIN 1"/>
    <property type="match status" value="1"/>
</dbReference>
<dbReference type="Pfam" id="PF02214">
    <property type="entry name" value="BTB_2"/>
    <property type="match status" value="1"/>
</dbReference>
<dbReference type="SMART" id="SM00225">
    <property type="entry name" value="BTB"/>
    <property type="match status" value="1"/>
</dbReference>
<dbReference type="SMART" id="SM00320">
    <property type="entry name" value="WD40"/>
    <property type="match status" value="3"/>
</dbReference>
<dbReference type="SUPFAM" id="SSF54695">
    <property type="entry name" value="POZ domain"/>
    <property type="match status" value="1"/>
</dbReference>
<dbReference type="SUPFAM" id="SSF50978">
    <property type="entry name" value="WD40 repeat-like"/>
    <property type="match status" value="1"/>
</dbReference>
<dbReference type="PROSITE" id="PS50097">
    <property type="entry name" value="BTB"/>
    <property type="match status" value="1"/>
</dbReference>
<dbReference type="PROSITE" id="PS00678">
    <property type="entry name" value="WD_REPEATS_1"/>
    <property type="match status" value="1"/>
</dbReference>
<comment type="function">
    <text evidence="5">Inhibits CBL-SH3KBP1 complex mediated down-regulation of EGFR signaling by sequestration of SH3KBP1. Binds to SH3KBP1 and prevents its interaction with CBL and inhibits translocation of SH3KBP1 to EGFR containing vesicles upon EGF stimulation (PubMed:21830225).</text>
</comment>
<comment type="subunit">
    <text evidence="1 4 5">Monomer (By similarity). Interacts with CUL3; interaction is direct and forms a 5:5 heterodecamer (By similarity). Interacts (via PXXXPR motifs) with SH3KBP1 (via SH3 domains) (PubMed:11152963, PubMed:21830225). Directly interacts with cathepsin B/CTSB (By similarity).</text>
</comment>
<comment type="interaction">
    <interactant intactId="EBI-7713890">
        <id>Q6P7W2</id>
    </interactant>
    <interactant intactId="EBI-7713572">
        <id>Q9JJ40</id>
        <label>Pdzk1</label>
    </interactant>
    <organismsDiffer>true</organismsDiffer>
    <experiments>7</experiments>
</comment>
<comment type="subcellular location">
    <subcellularLocation>
        <location evidence="1">Lysosome</location>
    </subcellularLocation>
</comment>
<comment type="alternative products">
    <event type="alternative splicing"/>
    <isoform>
        <id>Q6P7W2-1</id>
        <name>1</name>
        <sequence type="displayed"/>
    </isoform>
    <isoform>
        <id>Q6P7W2-2</id>
        <name>2</name>
        <sequence type="described" ref="VSP_028875 VSP_028876"/>
    </isoform>
</comment>
<comment type="similarity">
    <text evidence="7">Belongs to the KCTD3 family.</text>
</comment>
<name>SHKB1_MOUSE</name>
<gene>
    <name type="primary">Shkbp1</name>
    <name type="synonym">Sb1</name>
</gene>
<protein>
    <recommendedName>
        <fullName>SH3KBP1-binding protein 1</fullName>
    </recommendedName>
    <alternativeName>
        <fullName>SETA-binding protein 1</fullName>
    </alternativeName>
</protein>
<evidence type="ECO:0000250" key="1">
    <source>
        <dbReference type="UniProtKB" id="Q8TBC3"/>
    </source>
</evidence>
<evidence type="ECO:0000255" key="2">
    <source>
        <dbReference type="PROSITE-ProRule" id="PRU00037"/>
    </source>
</evidence>
<evidence type="ECO:0000256" key="3">
    <source>
        <dbReference type="SAM" id="MobiDB-lite"/>
    </source>
</evidence>
<evidence type="ECO:0000269" key="4">
    <source>
    </source>
</evidence>
<evidence type="ECO:0000269" key="5">
    <source>
    </source>
</evidence>
<evidence type="ECO:0000303" key="6">
    <source>
    </source>
</evidence>
<evidence type="ECO:0000305" key="7"/>
<evidence type="ECO:0000305" key="8">
    <source>
    </source>
</evidence>
<sequence length="704" mass="76103">MAVATTAVEGVPSRGAPGEVIHLNVGGKRFSTSRQTLTWIPDSFFSSLLSGRISTLKDETGAIFIDRDPTVFAPILNFLRTKELDPRGVHGSSLLHEAQFYGLTPLVRRLQVREELDRSSCGNVLFNGYLPPPVFPVKRRNRHSLVGPQQIGGRPAPVRRSNTMPPNLGNAGLLGRMLDERAPPSPSGQPEEPGMVRLVCGHHNWIAVAYTHFLVCYRLKEASGWQLAFSSPRLDWPIERLALAARVLGGAPGEHDKMVAAATGSEILLWALQAQGGGSEIGVFHLGVPVEALFFVGNQLIATSHTGRIGVWNAVTKHWQVQEVQPITSYDAAGSFLLLGCSNGSIYYVDVQKFPLRMKDNDLLVSELYRDPAEDGVTALSVYLTPKTSDSGNWIEIAYGTSSGVVRVIVQHPETVGSGPQLFQTFSVHRSPVTKIMLSEKHLISVCADNNHVRTWSVTRFRGMISTQPGSTPLASFKILALESVDGLGGCSAGNDIGPYGERDDQQVFIQKVVPNASQLFVRLSSTGQRVCSVRSVDGSPTTAFTVLECEGSRRLGSRPRRYLLTGQANGSLAMWDLTTAMDGLGQTPAGGLTEEELMDQLEQCELSPLASSRGSFPSPSPRTSLTSLHSASSNTSLYGPRGSPSPPQAEARRRGAGSFVDRCQELARGAPELRWPPTPAPRPSTSLGNPLTALKKTLNETSF</sequence>
<reference key="1">
    <citation type="journal article" date="2000" name="Cell. Signal.">
        <title>SETA is a multifunctional adapter protein with three SH3 domains that binds Grb2, Cbl, and the novel SB1 proteins.</title>
        <authorList>
            <person name="Borinstein S.C."/>
            <person name="Hyatt M.A."/>
            <person name="Sykes V.W."/>
            <person name="Straub R.E."/>
            <person name="Lipkowitz S."/>
            <person name="Boulter J."/>
            <person name="Boegler O."/>
        </authorList>
    </citation>
    <scope>NUCLEOTIDE SEQUENCE [MRNA] (ISOFORM 1)</scope>
    <scope>INTERACTION WITH SH3KBP1</scope>
</reference>
<reference key="2">
    <citation type="journal article" date="2005" name="Science">
        <title>The transcriptional landscape of the mammalian genome.</title>
        <authorList>
            <person name="Carninci P."/>
            <person name="Kasukawa T."/>
            <person name="Katayama S."/>
            <person name="Gough J."/>
            <person name="Frith M.C."/>
            <person name="Maeda N."/>
            <person name="Oyama R."/>
            <person name="Ravasi T."/>
            <person name="Lenhard B."/>
            <person name="Wells C."/>
            <person name="Kodzius R."/>
            <person name="Shimokawa K."/>
            <person name="Bajic V.B."/>
            <person name="Brenner S.E."/>
            <person name="Batalov S."/>
            <person name="Forrest A.R."/>
            <person name="Zavolan M."/>
            <person name="Davis M.J."/>
            <person name="Wilming L.G."/>
            <person name="Aidinis V."/>
            <person name="Allen J.E."/>
            <person name="Ambesi-Impiombato A."/>
            <person name="Apweiler R."/>
            <person name="Aturaliya R.N."/>
            <person name="Bailey T.L."/>
            <person name="Bansal M."/>
            <person name="Baxter L."/>
            <person name="Beisel K.W."/>
            <person name="Bersano T."/>
            <person name="Bono H."/>
            <person name="Chalk A.M."/>
            <person name="Chiu K.P."/>
            <person name="Choudhary V."/>
            <person name="Christoffels A."/>
            <person name="Clutterbuck D.R."/>
            <person name="Crowe M.L."/>
            <person name="Dalla E."/>
            <person name="Dalrymple B.P."/>
            <person name="de Bono B."/>
            <person name="Della Gatta G."/>
            <person name="di Bernardo D."/>
            <person name="Down T."/>
            <person name="Engstrom P."/>
            <person name="Fagiolini M."/>
            <person name="Faulkner G."/>
            <person name="Fletcher C.F."/>
            <person name="Fukushima T."/>
            <person name="Furuno M."/>
            <person name="Futaki S."/>
            <person name="Gariboldi M."/>
            <person name="Georgii-Hemming P."/>
            <person name="Gingeras T.R."/>
            <person name="Gojobori T."/>
            <person name="Green R.E."/>
            <person name="Gustincich S."/>
            <person name="Harbers M."/>
            <person name="Hayashi Y."/>
            <person name="Hensch T.K."/>
            <person name="Hirokawa N."/>
            <person name="Hill D."/>
            <person name="Huminiecki L."/>
            <person name="Iacono M."/>
            <person name="Ikeo K."/>
            <person name="Iwama A."/>
            <person name="Ishikawa T."/>
            <person name="Jakt M."/>
            <person name="Kanapin A."/>
            <person name="Katoh M."/>
            <person name="Kawasawa Y."/>
            <person name="Kelso J."/>
            <person name="Kitamura H."/>
            <person name="Kitano H."/>
            <person name="Kollias G."/>
            <person name="Krishnan S.P."/>
            <person name="Kruger A."/>
            <person name="Kummerfeld S.K."/>
            <person name="Kurochkin I.V."/>
            <person name="Lareau L.F."/>
            <person name="Lazarevic D."/>
            <person name="Lipovich L."/>
            <person name="Liu J."/>
            <person name="Liuni S."/>
            <person name="McWilliam S."/>
            <person name="Madan Babu M."/>
            <person name="Madera M."/>
            <person name="Marchionni L."/>
            <person name="Matsuda H."/>
            <person name="Matsuzawa S."/>
            <person name="Miki H."/>
            <person name="Mignone F."/>
            <person name="Miyake S."/>
            <person name="Morris K."/>
            <person name="Mottagui-Tabar S."/>
            <person name="Mulder N."/>
            <person name="Nakano N."/>
            <person name="Nakauchi H."/>
            <person name="Ng P."/>
            <person name="Nilsson R."/>
            <person name="Nishiguchi S."/>
            <person name="Nishikawa S."/>
            <person name="Nori F."/>
            <person name="Ohara O."/>
            <person name="Okazaki Y."/>
            <person name="Orlando V."/>
            <person name="Pang K.C."/>
            <person name="Pavan W.J."/>
            <person name="Pavesi G."/>
            <person name="Pesole G."/>
            <person name="Petrovsky N."/>
            <person name="Piazza S."/>
            <person name="Reed J."/>
            <person name="Reid J.F."/>
            <person name="Ring B.Z."/>
            <person name="Ringwald M."/>
            <person name="Rost B."/>
            <person name="Ruan Y."/>
            <person name="Salzberg S.L."/>
            <person name="Sandelin A."/>
            <person name="Schneider C."/>
            <person name="Schoenbach C."/>
            <person name="Sekiguchi K."/>
            <person name="Semple C.A."/>
            <person name="Seno S."/>
            <person name="Sessa L."/>
            <person name="Sheng Y."/>
            <person name="Shibata Y."/>
            <person name="Shimada H."/>
            <person name="Shimada K."/>
            <person name="Silva D."/>
            <person name="Sinclair B."/>
            <person name="Sperling S."/>
            <person name="Stupka E."/>
            <person name="Sugiura K."/>
            <person name="Sultana R."/>
            <person name="Takenaka Y."/>
            <person name="Taki K."/>
            <person name="Tammoja K."/>
            <person name="Tan S.L."/>
            <person name="Tang S."/>
            <person name="Taylor M.S."/>
            <person name="Tegner J."/>
            <person name="Teichmann S.A."/>
            <person name="Ueda H.R."/>
            <person name="van Nimwegen E."/>
            <person name="Verardo R."/>
            <person name="Wei C.L."/>
            <person name="Yagi K."/>
            <person name="Yamanishi H."/>
            <person name="Zabarovsky E."/>
            <person name="Zhu S."/>
            <person name="Zimmer A."/>
            <person name="Hide W."/>
            <person name="Bult C."/>
            <person name="Grimmond S.M."/>
            <person name="Teasdale R.D."/>
            <person name="Liu E.T."/>
            <person name="Brusic V."/>
            <person name="Quackenbush J."/>
            <person name="Wahlestedt C."/>
            <person name="Mattick J.S."/>
            <person name="Hume D.A."/>
            <person name="Kai C."/>
            <person name="Sasaki D."/>
            <person name="Tomaru Y."/>
            <person name="Fukuda S."/>
            <person name="Kanamori-Katayama M."/>
            <person name="Suzuki M."/>
            <person name="Aoki J."/>
            <person name="Arakawa T."/>
            <person name="Iida J."/>
            <person name="Imamura K."/>
            <person name="Itoh M."/>
            <person name="Kato T."/>
            <person name="Kawaji H."/>
            <person name="Kawagashira N."/>
            <person name="Kawashima T."/>
            <person name="Kojima M."/>
            <person name="Kondo S."/>
            <person name="Konno H."/>
            <person name="Nakano K."/>
            <person name="Ninomiya N."/>
            <person name="Nishio T."/>
            <person name="Okada M."/>
            <person name="Plessy C."/>
            <person name="Shibata K."/>
            <person name="Shiraki T."/>
            <person name="Suzuki S."/>
            <person name="Tagami M."/>
            <person name="Waki K."/>
            <person name="Watahiki A."/>
            <person name="Okamura-Oho Y."/>
            <person name="Suzuki H."/>
            <person name="Kawai J."/>
            <person name="Hayashizaki Y."/>
        </authorList>
    </citation>
    <scope>NUCLEOTIDE SEQUENCE [LARGE SCALE MRNA] (ISOFORM 2)</scope>
    <source>
        <strain>C57BL/6J</strain>
        <tissue>Embryo</tissue>
    </source>
</reference>
<reference key="3">
    <citation type="journal article" date="2004" name="Genome Res.">
        <title>The status, quality, and expansion of the NIH full-length cDNA project: the Mammalian Gene Collection (MGC).</title>
        <authorList>
            <consortium name="The MGC Project Team"/>
        </authorList>
    </citation>
    <scope>NUCLEOTIDE SEQUENCE [LARGE SCALE MRNA] (ISOFORM 1)</scope>
    <source>
        <tissue>Embryo</tissue>
    </source>
</reference>
<reference key="4">
    <citation type="journal article" date="2011" name="Cell Biochem. Funct.">
        <title>SH3KBP1-binding protein 1 prevents epidermal growth factor receptor degradation by the interruption of c-Cbl-CIN85 complex.</title>
        <authorList>
            <person name="Feng L."/>
            <person name="Wang J.T."/>
            <person name="Jin H."/>
            <person name="Qian K."/>
            <person name="Geng J.G."/>
        </authorList>
    </citation>
    <scope>FUNCTION</scope>
    <scope>INTERACTION WITH SH3KBP1</scope>
    <scope>DOMAIN PXXXPR MOTIF</scope>
    <scope>MUTAGENESIS OF ARG-623 AND ARG-683</scope>
</reference>